<sequence>MPRVFLVRSRRPQPPNWSHLPDQLRGDAYVPDCSSLAVPPAHRSSGLRDTWAVSSQGTLTSAPKGPGTLGCPLCPKAFPLQRMLTRHLKCHSPARRHVCHYCGKGFHDAFDLKRHMRTHTGIRPFRCGACGKAFTQRCSLEAHLAKVHGQPASYAYRERREKLHVCEDCGFTSSRPDAYAQHRTLHRTT</sequence>
<evidence type="ECO:0000250" key="1"/>
<evidence type="ECO:0000255" key="2">
    <source>
        <dbReference type="PROSITE-ProRule" id="PRU00042"/>
    </source>
</evidence>
<evidence type="ECO:0000256" key="3">
    <source>
        <dbReference type="SAM" id="MobiDB-lite"/>
    </source>
</evidence>
<evidence type="ECO:0000305" key="4"/>
<comment type="function">
    <text evidence="1">May act as a transcription regulator.</text>
</comment>
<comment type="subcellular location">
    <subcellularLocation>
        <location evidence="4">Nucleus</location>
    </subcellularLocation>
</comment>
<comment type="similarity">
    <text evidence="4">Belongs to the krueppel C2H2-type zinc-finger protein family.</text>
</comment>
<reference key="1">
    <citation type="journal article" date="2009" name="PLoS Biol.">
        <title>Lineage-specific biology revealed by a finished genome assembly of the mouse.</title>
        <authorList>
            <person name="Church D.M."/>
            <person name="Goodstadt L."/>
            <person name="Hillier L.W."/>
            <person name="Zody M.C."/>
            <person name="Goldstein S."/>
            <person name="She X."/>
            <person name="Bult C.J."/>
            <person name="Agarwala R."/>
            <person name="Cherry J.L."/>
            <person name="DiCuccio M."/>
            <person name="Hlavina W."/>
            <person name="Kapustin Y."/>
            <person name="Meric P."/>
            <person name="Maglott D."/>
            <person name="Birtle Z."/>
            <person name="Marques A.C."/>
            <person name="Graves T."/>
            <person name="Zhou S."/>
            <person name="Teague B."/>
            <person name="Potamousis K."/>
            <person name="Churas C."/>
            <person name="Place M."/>
            <person name="Herschleb J."/>
            <person name="Runnheim R."/>
            <person name="Forrest D."/>
            <person name="Amos-Landgraf J."/>
            <person name="Schwartz D.C."/>
            <person name="Cheng Z."/>
            <person name="Lindblad-Toh K."/>
            <person name="Eichler E.E."/>
            <person name="Ponting C.P."/>
        </authorList>
    </citation>
    <scope>NUCLEOTIDE SEQUENCE [LARGE SCALE GENOMIC DNA]</scope>
    <source>
        <strain>C57BL/6J</strain>
    </source>
</reference>
<name>OVOL3_MOUSE</name>
<gene>
    <name type="primary">Ovol3</name>
</gene>
<dbReference type="EMBL" id="AC149067">
    <property type="status" value="NOT_ANNOTATED_CDS"/>
    <property type="molecule type" value="Genomic_DNA"/>
</dbReference>
<dbReference type="CCDS" id="CCDS80691.1"/>
<dbReference type="RefSeq" id="NP_001276746.1">
    <property type="nucleotide sequence ID" value="NM_001289817.1"/>
</dbReference>
<dbReference type="RefSeq" id="XP_011248918.1">
    <property type="nucleotide sequence ID" value="XM_011250616.2"/>
</dbReference>
<dbReference type="RefSeq" id="XP_036009090.1">
    <property type="nucleotide sequence ID" value="XM_036153197.1"/>
</dbReference>
<dbReference type="SMR" id="D3YYM0"/>
<dbReference type="FunCoup" id="D3YYM0">
    <property type="interactions" value="540"/>
</dbReference>
<dbReference type="STRING" id="10090.ENSMUSP00000140811"/>
<dbReference type="PhosphoSitePlus" id="D3YYM0"/>
<dbReference type="PaxDb" id="10090-ENSMUSP00000140811"/>
<dbReference type="Antibodypedia" id="82592">
    <property type="antibodies" value="2 antibodies from 2 providers"/>
</dbReference>
<dbReference type="Ensembl" id="ENSMUST00000189482.2">
    <property type="protein sequence ID" value="ENSMUSP00000140811.2"/>
    <property type="gene ID" value="ENSMUSG00000100512.2"/>
</dbReference>
<dbReference type="GeneID" id="381867"/>
<dbReference type="KEGG" id="mmu:381867"/>
<dbReference type="UCSC" id="uc033iyh.1">
    <property type="organism name" value="mouse"/>
</dbReference>
<dbReference type="AGR" id="MGI:2388075"/>
<dbReference type="CTD" id="728361"/>
<dbReference type="MGI" id="MGI:2388075">
    <property type="gene designation" value="Ovol3"/>
</dbReference>
<dbReference type="VEuPathDB" id="HostDB:ENSMUSG00000100512"/>
<dbReference type="eggNOG" id="KOG3576">
    <property type="taxonomic scope" value="Eukaryota"/>
</dbReference>
<dbReference type="GeneTree" id="ENSGT00940000162348"/>
<dbReference type="HOGENOM" id="CLU_087964_0_0_1"/>
<dbReference type="InParanoid" id="D3YYM0"/>
<dbReference type="OMA" id="PPNWDHL"/>
<dbReference type="OrthoDB" id="6508643at2759"/>
<dbReference type="PhylomeDB" id="D3YYM0"/>
<dbReference type="BioGRID-ORCS" id="381867">
    <property type="hits" value="0 hits in 45 CRISPR screens"/>
</dbReference>
<dbReference type="PRO" id="PR:D3YYM0"/>
<dbReference type="Proteomes" id="UP000000589">
    <property type="component" value="Chromosome 7"/>
</dbReference>
<dbReference type="RNAct" id="D3YYM0">
    <property type="molecule type" value="protein"/>
</dbReference>
<dbReference type="Bgee" id="ENSMUSG00000100512">
    <property type="expression patterns" value="Expressed in embryonic cell in blastocyst and 14 other cell types or tissues"/>
</dbReference>
<dbReference type="GO" id="GO:0005634">
    <property type="term" value="C:nucleus"/>
    <property type="evidence" value="ECO:0007669"/>
    <property type="project" value="UniProtKB-SubCell"/>
</dbReference>
<dbReference type="GO" id="GO:0008270">
    <property type="term" value="F:zinc ion binding"/>
    <property type="evidence" value="ECO:0007669"/>
    <property type="project" value="UniProtKB-KW"/>
</dbReference>
<dbReference type="FunFam" id="3.30.160.60:FF:001250">
    <property type="entry name" value="putative transcription factor ovo-like protein 3"/>
    <property type="match status" value="1"/>
</dbReference>
<dbReference type="FunFam" id="3.30.160.60:FF:000452">
    <property type="entry name" value="Transcription factor Ovo-like 2"/>
    <property type="match status" value="1"/>
</dbReference>
<dbReference type="Gene3D" id="3.30.160.60">
    <property type="entry name" value="Classic Zinc Finger"/>
    <property type="match status" value="2"/>
</dbReference>
<dbReference type="InterPro" id="IPR027756">
    <property type="entry name" value="Ovo-like"/>
</dbReference>
<dbReference type="InterPro" id="IPR036236">
    <property type="entry name" value="Znf_C2H2_sf"/>
</dbReference>
<dbReference type="InterPro" id="IPR013087">
    <property type="entry name" value="Znf_C2H2_type"/>
</dbReference>
<dbReference type="PANTHER" id="PTHR10032:SF220">
    <property type="entry name" value="TRANSCRIPTION FACTOR OVO-LIKE PROTEIN 3-RELATED"/>
    <property type="match status" value="1"/>
</dbReference>
<dbReference type="PANTHER" id="PTHR10032">
    <property type="entry name" value="ZINC FINGER PROTEIN WITH KRAB AND SCAN DOMAINS"/>
    <property type="match status" value="1"/>
</dbReference>
<dbReference type="Pfam" id="PF13465">
    <property type="entry name" value="zf-H2C2_2"/>
    <property type="match status" value="1"/>
</dbReference>
<dbReference type="SMART" id="SM00355">
    <property type="entry name" value="ZnF_C2H2"/>
    <property type="match status" value="4"/>
</dbReference>
<dbReference type="SUPFAM" id="SSF57667">
    <property type="entry name" value="beta-beta-alpha zinc fingers"/>
    <property type="match status" value="1"/>
</dbReference>
<dbReference type="PROSITE" id="PS00028">
    <property type="entry name" value="ZINC_FINGER_C2H2_1"/>
    <property type="match status" value="3"/>
</dbReference>
<dbReference type="PROSITE" id="PS50157">
    <property type="entry name" value="ZINC_FINGER_C2H2_2"/>
    <property type="match status" value="3"/>
</dbReference>
<keyword id="KW-0479">Metal-binding</keyword>
<keyword id="KW-0539">Nucleus</keyword>
<keyword id="KW-1185">Reference proteome</keyword>
<keyword id="KW-0677">Repeat</keyword>
<keyword id="KW-0862">Zinc</keyword>
<keyword id="KW-0863">Zinc-finger</keyword>
<feature type="chain" id="PRO_0000415414" description="Putative transcription factor ovo-like protein 3">
    <location>
        <begin position="1"/>
        <end position="189"/>
    </location>
</feature>
<feature type="zinc finger region" description="C2H2-type 1" evidence="2">
    <location>
        <begin position="69"/>
        <end position="91"/>
    </location>
</feature>
<feature type="zinc finger region" description="C2H2-type 2" evidence="2">
    <location>
        <begin position="97"/>
        <end position="119"/>
    </location>
</feature>
<feature type="zinc finger region" description="C2H2-type 3" evidence="2">
    <location>
        <begin position="125"/>
        <end position="148"/>
    </location>
</feature>
<feature type="zinc finger region" description="C2H2-type 4" evidence="2">
    <location>
        <begin position="164"/>
        <end position="186"/>
    </location>
</feature>
<feature type="region of interest" description="Disordered" evidence="3">
    <location>
        <begin position="1"/>
        <end position="20"/>
    </location>
</feature>
<accession>D3YYM0</accession>
<organism>
    <name type="scientific">Mus musculus</name>
    <name type="common">Mouse</name>
    <dbReference type="NCBI Taxonomy" id="10090"/>
    <lineage>
        <taxon>Eukaryota</taxon>
        <taxon>Metazoa</taxon>
        <taxon>Chordata</taxon>
        <taxon>Craniata</taxon>
        <taxon>Vertebrata</taxon>
        <taxon>Euteleostomi</taxon>
        <taxon>Mammalia</taxon>
        <taxon>Eutheria</taxon>
        <taxon>Euarchontoglires</taxon>
        <taxon>Glires</taxon>
        <taxon>Rodentia</taxon>
        <taxon>Myomorpha</taxon>
        <taxon>Muroidea</taxon>
        <taxon>Muridae</taxon>
        <taxon>Murinae</taxon>
        <taxon>Mus</taxon>
        <taxon>Mus</taxon>
    </lineage>
</organism>
<proteinExistence type="inferred from homology"/>
<protein>
    <recommendedName>
        <fullName>Putative transcription factor ovo-like protein 3</fullName>
    </recommendedName>
</protein>